<evidence type="ECO:0000250" key="1">
    <source>
        <dbReference type="UniProtKB" id="L7X8J4"/>
    </source>
</evidence>
<evidence type="ECO:0000255" key="2"/>
<evidence type="ECO:0000255" key="3">
    <source>
        <dbReference type="PROSITE-ProRule" id="PRU00258"/>
    </source>
</evidence>
<evidence type="ECO:0000255" key="4">
    <source>
        <dbReference type="PROSITE-ProRule" id="PRU01348"/>
    </source>
</evidence>
<evidence type="ECO:0000255" key="5">
    <source>
        <dbReference type="PROSITE-ProRule" id="PRU01363"/>
    </source>
</evidence>
<evidence type="ECO:0000269" key="6">
    <source>
    </source>
</evidence>
<evidence type="ECO:0000269" key="7">
    <source>
    </source>
</evidence>
<evidence type="ECO:0000303" key="8">
    <source>
    </source>
</evidence>
<evidence type="ECO:0000303" key="9">
    <source>
    </source>
</evidence>
<evidence type="ECO:0000305" key="10">
    <source>
    </source>
</evidence>
<accession>P0DUT7</accession>
<sequence>MLQKSYHGVVSQASYDNTCGRGSQIRRDRSRAGVRFNTEYNPVLLTVSKQIAQDGEGYHCRANLINKITTKQQLAFISELQPTQSTLKVLPVADGRKMPIEPIAIVGASCRLPGSSNSLDSLWELLADGGEAWSSVPADRFNEAAFHHPNASDPNGTNNHQGGHFIDGDIRDFDHAFFHLSPQHAAAMDPQQRILLELVYEAFESAGWAREACAGSRTAVFAAIFGTDYDRNLCKDLLDLPVYHSVGTGIAILANRISHAFDLRGPSLTLDTGCSGGLVALHEACQSLRNGESDAALVAAANLQLMPDHYIGMSSQHMVSSTGRCYPFDLRGDGYGRGEGFAVVALKRLSDALRDQDPIRSVILNSGINQDGYTASGITHPNRVAQADLIRDTYDRVHLHPQDTVYVEAHGTGTVAGDNEELAAIAEVFAGPDRSLPLHVGSNKGSIGHTESTSGLASLLKVILMLDHQVIPPVAGFTNPKPGLPLDRIKIPTQRLPWPLTEGMVPRISINSFGYGGTNAHAIMERGPRTYDASCNTTPTYSPRLFVLSANNKGSLRSLLESYVNWIQKHPNIPLADISYTLCHRRSALPWRFSCVADSESSLLDTLERGVKLISTRPPPSKRQVIYVFTGQGAQWAGMGHELLLETTPSSVFRDSIRTSRDILYELGATWDLEAELLGQDGGGRINKAELAQPATTAVQIGIVMLLRSQGVRPWAVVGHSSGEIAAAYAAGRLSHRMALRVAFHRGFMAGVSKDRGLPPGAMLSIGLGQGDAAPYLHDLTHGEAVIACINSPNSVTVSGDAAAVDEVMARIIARGDGTFCRKLHVDTAYHSHHMRAVADEYCIRLGDLDLGIDERISAPGGQRDKEEVKYFSSNSGLAWVSGFAASYWVDNLISPVRFSDAIQTVAREHHKHNGGLALFVEIGPHAALAGPIRQCLAASNVPKLEYNYLSALKRGAGAVETMLQVVGHLFERGVRVNFDEISALTPGFHTAAVRPDLPSYCWDYSSKHWHESRLSREYRMRREPYHHLLGVRMTELASTEPRWRHMVGLATLPWLAHHIIDGLIIFPGACYVCMVIEAVRQLAKEQYSDQALEAVSLRDVSFLRALVVPDAPSRVEMQLSLKHRADASPLGFTFSVTALSDGKWHVFCTGVVEGVMTLDKPETEPVMLDPRPKQDWLNRTMVIPEELYNEMTADGNTYGPSFRGLSSLTMSTDGSMATAVIEVPDIAASMPAQYQASHILHPTTLDSMFHVGIPMMKRRHGAGSVMPVHIGELLISTQTPALNSQGSKLDVSAKLTSSHFRASNIDMTIVSGGFPVMYASAIESRSLAAHVDGAHGTQDEHGICYELAWRCDLNFLRTSDLTRSSILADLVSFLCFKTAHLSIAELGESPGVLAPAFLAAVGVHRGTVTSYDVVERGNQPIDEGCKRLTGYPIRRRALDPDSSLESQGFAPNTYDVVLASDLGSLCYVSTLVKNDGVVVVVLKPGSDDNWQSTLRKTWPSHDIQLTVVDSVNGNRIILARNDKTKDSHSSSRVHILTHSALQTTPSWATALIGKLHEMGYEMSSGSLSQDVIQRSSDARNTCIMVIDDLAQPILSDRACFNSAITLLRQEHRIIWLSLDSPSSMHQITGVARTAHAENDNLRLTVVHAALEAIGSPPLVDLLCHCLTYAQNRDSLAPYEREYRVSRDAAVLIPRLRSSDCLNRAIRASEKASEPSSNIETEPHHYINTTRSLALGPVQSSKGDGDIVFIDSHTVELAEGQVEVETEAFVLSKSQNLTSSQLGEYSGIVRRVGKGVRDFSPGDAVVALALDGVVGANHARVPSSHVSRRPDSLSPAVAAALFLPTIAASYAIHHLAQISKGKSIVLIHGVLTDIGRASVAVARVLGATITATAISRQEALEITQQLNIQLENIIVSRPSLLRPQLDELFQLDAIIHISKDSVPVAAWSCLKPFGQVVVFNSSSSIAFPSPPPENATIHYCHITNLVQAQPDRLADLVSLAAPALERIPFKGIDLCIQDVAQVPEAIRLVRQGGKVILQASPSSLVRTVIPSSISMDWEAVDAAYVVAGGMGDLGRRLLLLMARRGAMHLVTLSRRSIEPEDHRSFQGQLQLVQPGCRLYCLVCDITSESSVQNAADTLTRTGVPPVRGVIQSAVTLHDRTLETMTFDDFFAVAHAKVDGTLVLERVFASPHLHFFLMLSSAVNITGASGQANYNAGNAVQDAIAHDRGPGFLSMNIGWIEDAINTSNNKTILQGLWRTGLRPILGQELSRYFDHLLGAASSHSRMRQAIIGFNAASLSHTSASNSNVHSAMFCHIRGSLAAEESSSSTNNVRSFGEVVEGGDLDTIIDFISSAITRRLMTLISMDDDQIKDRNGSILDLGLDSLVAIELRNWITREFKSPLQSSEILTDQPIRDLAEKVASRSSLLASGLDKEVPAGSLENGDVEDRHSAGAIRPSTSAHSTVKYVSENLPPLPLPPLADTLRLFEDSRRAIDTANHRRNTSDAVHDFLKGPGPRLYNSLQETNSDVIADAYDRQVYLERREPLPEQGPFIFIHSIQAPVHSQARRAAILTIAAFDFIRLLARGDIATDTLHGEPITTEGRNWLFYATRRPGIGIDRMERHVPNNTVAVLRRGHVFQLRLPDVEQALDMLAVTRVYDDILAASCDAIPPICTLTADERDSWALFRLDLERHPQNAAVLACIDTAAFVMCLDDESPTSSGERYTQFMINGAHRPFANRWLDKTLQFAVTANGISAEIYEHSKLDGIDTNRLHAHIARAILAHPPSETADISSFSSPYAVQELMWEPSSATLQRIEHVRTQCQVYGPLDHQVFDVASLGLRSLRGFRLQPNATAHLTVLLALYLVDGEIRPAWEKVSLGTFARGRVEWVQTISPAARAFIEAAAASYTDSNNRTRVRALLHQATSTHSRSLVAAGRGLGAVRALYALRGAAQEQEKELPELFRTHSWDATRRGGPGQDVKLGFMRLAPDDDANGNVGATPGDDDINGRWDEAGFLVCGERGVYVHCNVWEKHARFAASGRPAYVTKLCKAMRRASCMITSLLEDPSKRPT</sequence>
<feature type="chain" id="PRO_0000453547" description="Highly reducing polyketide synthase 17">
    <location>
        <begin position="1"/>
        <end position="3068"/>
    </location>
</feature>
<feature type="domain" description="Ketosynthase family 3 (KS3)" evidence="4 10">
    <location>
        <begin position="100"/>
        <end position="526"/>
    </location>
</feature>
<feature type="domain" description="PKS/mFAS DH" evidence="5">
    <location>
        <begin position="1027"/>
        <end position="1334"/>
    </location>
</feature>
<feature type="domain" description="Carrier" evidence="3 10">
    <location>
        <begin position="2345"/>
        <end position="2423"/>
    </location>
</feature>
<feature type="region of interest" description="Malonyl-CoA:ACP transacylase (MAT) domain" evidence="2 10">
    <location>
        <begin position="627"/>
        <end position="938"/>
    </location>
</feature>
<feature type="region of interest" description="Dehydratase (DH) domain" evidence="2 10">
    <location>
        <begin position="1027"/>
        <end position="1311"/>
    </location>
</feature>
<feature type="region of interest" description="N-terminal hotdog fold" evidence="5">
    <location>
        <begin position="1027"/>
        <end position="1160"/>
    </location>
</feature>
<feature type="region of interest" description="C-terminal hotdog fold" evidence="5">
    <location>
        <begin position="1179"/>
        <end position="1334"/>
    </location>
</feature>
<feature type="region of interest" description="Enoylreductase (ER) domain" evidence="2 10">
    <location>
        <begin position="1735"/>
        <end position="2037"/>
    </location>
</feature>
<feature type="region of interest" description="Catalytic ketoreductase (KR) domain" evidence="2 10">
    <location>
        <begin position="2062"/>
        <end position="2240"/>
    </location>
</feature>
<feature type="region of interest" description="Choline/carnitine acyltransferase (cAT) domain" evidence="2 10">
    <location>
        <begin position="2831"/>
        <end position="3062"/>
    </location>
</feature>
<feature type="active site" description="For beta-ketoacyl synthase activity" evidence="4">
    <location>
        <position position="274"/>
    </location>
</feature>
<feature type="active site" description="For beta-ketoacyl synthase activity" evidence="4">
    <location>
        <position position="410"/>
    </location>
</feature>
<feature type="active site" description="For beta-ketoacyl synthase activity" evidence="4">
    <location>
        <position position="449"/>
    </location>
</feature>
<feature type="active site" description="For malonyltransferase activity" evidence="1">
    <location>
        <position position="721"/>
    </location>
</feature>
<feature type="active site" description="Proton acceptor; for dehydratase activity" evidence="5">
    <location>
        <position position="1059"/>
    </location>
</feature>
<feature type="active site" description="Proton donor; for dehydratase activity" evidence="5">
    <location>
        <position position="1247"/>
    </location>
</feature>
<feature type="modified residue" description="O-(pantetheine 4'-phosphoryl)serine" evidence="3">
    <location>
        <position position="2383"/>
    </location>
</feature>
<keyword id="KW-0012">Acyltransferase</keyword>
<keyword id="KW-0489">Methyltransferase</keyword>
<keyword id="KW-0511">Multifunctional enzyme</keyword>
<keyword id="KW-0521">NADP</keyword>
<keyword id="KW-0560">Oxidoreductase</keyword>
<keyword id="KW-0596">Phosphopantetheine</keyword>
<keyword id="KW-0597">Phosphoprotein</keyword>
<keyword id="KW-0808">Transferase</keyword>
<protein>
    <recommendedName>
        <fullName evidence="9">Highly reducing polyketide synthase 17</fullName>
        <shortName evidence="9">HR-PKS 17</shortName>
        <ecNumber evidence="7">2.3.1.-</ecNumber>
    </recommendedName>
    <alternativeName>
        <fullName evidence="8">PKS17 biosynthesis gene cluster protein Ba17a</fullName>
    </alternativeName>
    <alternativeName>
        <fullName evidence="9">Polyenoic acids biosynthesis gene cluster protein Ba17a</fullName>
    </alternativeName>
</protein>
<dbReference type="EC" id="2.3.1.-" evidence="7"/>
<dbReference type="EMBL" id="JNNZ01000213">
    <property type="protein sequence ID" value="KFG78606.1"/>
    <property type="molecule type" value="Genomic_DNA"/>
</dbReference>
<dbReference type="SMR" id="P0DUT7"/>
<dbReference type="VEuPathDB" id="FungiDB:MAN_00012"/>
<dbReference type="OrthoDB" id="10036at5529"/>
<dbReference type="GO" id="GO:0004312">
    <property type="term" value="F:fatty acid synthase activity"/>
    <property type="evidence" value="ECO:0007669"/>
    <property type="project" value="TreeGrafter"/>
</dbReference>
<dbReference type="GO" id="GO:0008168">
    <property type="term" value="F:methyltransferase activity"/>
    <property type="evidence" value="ECO:0007669"/>
    <property type="project" value="UniProtKB-KW"/>
</dbReference>
<dbReference type="GO" id="GO:0016491">
    <property type="term" value="F:oxidoreductase activity"/>
    <property type="evidence" value="ECO:0007669"/>
    <property type="project" value="UniProtKB-KW"/>
</dbReference>
<dbReference type="GO" id="GO:0031177">
    <property type="term" value="F:phosphopantetheine binding"/>
    <property type="evidence" value="ECO:0007669"/>
    <property type="project" value="InterPro"/>
</dbReference>
<dbReference type="GO" id="GO:0006633">
    <property type="term" value="P:fatty acid biosynthetic process"/>
    <property type="evidence" value="ECO:0007669"/>
    <property type="project" value="TreeGrafter"/>
</dbReference>
<dbReference type="GO" id="GO:0032259">
    <property type="term" value="P:methylation"/>
    <property type="evidence" value="ECO:0007669"/>
    <property type="project" value="UniProtKB-KW"/>
</dbReference>
<dbReference type="GO" id="GO:0044550">
    <property type="term" value="P:secondary metabolite biosynthetic process"/>
    <property type="evidence" value="ECO:0007669"/>
    <property type="project" value="TreeGrafter"/>
</dbReference>
<dbReference type="CDD" id="cd05195">
    <property type="entry name" value="enoyl_red"/>
    <property type="match status" value="1"/>
</dbReference>
<dbReference type="CDD" id="cd00833">
    <property type="entry name" value="PKS"/>
    <property type="match status" value="1"/>
</dbReference>
<dbReference type="Gene3D" id="3.40.47.10">
    <property type="match status" value="1"/>
</dbReference>
<dbReference type="Gene3D" id="1.10.1200.10">
    <property type="entry name" value="ACP-like"/>
    <property type="match status" value="1"/>
</dbReference>
<dbReference type="Gene3D" id="3.30.559.10">
    <property type="entry name" value="Chloramphenicol acetyltransferase-like domain"/>
    <property type="match status" value="1"/>
</dbReference>
<dbReference type="Gene3D" id="3.30.559.70">
    <property type="entry name" value="Choline/Carnitine o-acyltransferase, domain 2"/>
    <property type="match status" value="1"/>
</dbReference>
<dbReference type="Gene3D" id="3.40.366.10">
    <property type="entry name" value="Malonyl-Coenzyme A Acyl Carrier Protein, domain 2"/>
    <property type="match status" value="1"/>
</dbReference>
<dbReference type="Gene3D" id="3.90.180.10">
    <property type="entry name" value="Medium-chain alcohol dehydrogenases, catalytic domain"/>
    <property type="match status" value="1"/>
</dbReference>
<dbReference type="Gene3D" id="3.40.50.720">
    <property type="entry name" value="NAD(P)-binding Rossmann-like Domain"/>
    <property type="match status" value="1"/>
</dbReference>
<dbReference type="Gene3D" id="3.10.129.110">
    <property type="entry name" value="Polyketide synthase dehydratase"/>
    <property type="match status" value="1"/>
</dbReference>
<dbReference type="InterPro" id="IPR001227">
    <property type="entry name" value="Ac_transferase_dom_sf"/>
</dbReference>
<dbReference type="InterPro" id="IPR036736">
    <property type="entry name" value="ACP-like_sf"/>
</dbReference>
<dbReference type="InterPro" id="IPR014043">
    <property type="entry name" value="Acyl_transferase_dom"/>
</dbReference>
<dbReference type="InterPro" id="IPR016035">
    <property type="entry name" value="Acyl_Trfase/lysoPLipase"/>
</dbReference>
<dbReference type="InterPro" id="IPR023213">
    <property type="entry name" value="CAT-like_dom_sf"/>
</dbReference>
<dbReference type="InterPro" id="IPR039551">
    <property type="entry name" value="Cho/carn_acyl_trans"/>
</dbReference>
<dbReference type="InterPro" id="IPR042231">
    <property type="entry name" value="Cho/carn_acyl_trans_2"/>
</dbReference>
<dbReference type="InterPro" id="IPR011032">
    <property type="entry name" value="GroES-like_sf"/>
</dbReference>
<dbReference type="InterPro" id="IPR014031">
    <property type="entry name" value="Ketoacyl_synth_C"/>
</dbReference>
<dbReference type="InterPro" id="IPR014030">
    <property type="entry name" value="Ketoacyl_synth_N"/>
</dbReference>
<dbReference type="InterPro" id="IPR016036">
    <property type="entry name" value="Malonyl_transacylase_ACP-bd"/>
</dbReference>
<dbReference type="InterPro" id="IPR036291">
    <property type="entry name" value="NAD(P)-bd_dom_sf"/>
</dbReference>
<dbReference type="InterPro" id="IPR032821">
    <property type="entry name" value="PKS_assoc"/>
</dbReference>
<dbReference type="InterPro" id="IPR020841">
    <property type="entry name" value="PKS_Beta-ketoAc_synthase_dom"/>
</dbReference>
<dbReference type="InterPro" id="IPR042104">
    <property type="entry name" value="PKS_dehydratase_sf"/>
</dbReference>
<dbReference type="InterPro" id="IPR020807">
    <property type="entry name" value="PKS_DH"/>
</dbReference>
<dbReference type="InterPro" id="IPR049551">
    <property type="entry name" value="PKS_DH_C"/>
</dbReference>
<dbReference type="InterPro" id="IPR049552">
    <property type="entry name" value="PKS_DH_N"/>
</dbReference>
<dbReference type="InterPro" id="IPR020843">
    <property type="entry name" value="PKS_ER"/>
</dbReference>
<dbReference type="InterPro" id="IPR013968">
    <property type="entry name" value="PKS_KR"/>
</dbReference>
<dbReference type="InterPro" id="IPR049900">
    <property type="entry name" value="PKS_mFAS_DH"/>
</dbReference>
<dbReference type="InterPro" id="IPR050091">
    <property type="entry name" value="PKS_NRPS_Biosynth_Enz"/>
</dbReference>
<dbReference type="InterPro" id="IPR020806">
    <property type="entry name" value="PKS_PP-bd"/>
</dbReference>
<dbReference type="InterPro" id="IPR009081">
    <property type="entry name" value="PP-bd_ACP"/>
</dbReference>
<dbReference type="InterPro" id="IPR006162">
    <property type="entry name" value="Ppantetheine_attach_site"/>
</dbReference>
<dbReference type="InterPro" id="IPR016039">
    <property type="entry name" value="Thiolase-like"/>
</dbReference>
<dbReference type="PANTHER" id="PTHR43775">
    <property type="entry name" value="FATTY ACID SYNTHASE"/>
    <property type="match status" value="1"/>
</dbReference>
<dbReference type="PANTHER" id="PTHR43775:SF22">
    <property type="entry name" value="SYNTHASE, PUTATIVE (JCVI)-RELATED"/>
    <property type="match status" value="1"/>
</dbReference>
<dbReference type="Pfam" id="PF23297">
    <property type="entry name" value="ACP_SdgA_C"/>
    <property type="match status" value="1"/>
</dbReference>
<dbReference type="Pfam" id="PF00698">
    <property type="entry name" value="Acyl_transf_1"/>
    <property type="match status" value="1"/>
</dbReference>
<dbReference type="Pfam" id="PF00755">
    <property type="entry name" value="Carn_acyltransf"/>
    <property type="match status" value="1"/>
</dbReference>
<dbReference type="Pfam" id="PF16197">
    <property type="entry name" value="KAsynt_C_assoc"/>
    <property type="match status" value="1"/>
</dbReference>
<dbReference type="Pfam" id="PF00109">
    <property type="entry name" value="ketoacyl-synt"/>
    <property type="match status" value="1"/>
</dbReference>
<dbReference type="Pfam" id="PF02801">
    <property type="entry name" value="Ketoacyl-synt_C"/>
    <property type="match status" value="1"/>
</dbReference>
<dbReference type="Pfam" id="PF08659">
    <property type="entry name" value="KR"/>
    <property type="match status" value="1"/>
</dbReference>
<dbReference type="Pfam" id="PF21089">
    <property type="entry name" value="PKS_DH_N"/>
    <property type="match status" value="1"/>
</dbReference>
<dbReference type="Pfam" id="PF14765">
    <property type="entry name" value="PS-DH"/>
    <property type="match status" value="1"/>
</dbReference>
<dbReference type="SMART" id="SM00827">
    <property type="entry name" value="PKS_AT"/>
    <property type="match status" value="1"/>
</dbReference>
<dbReference type="SMART" id="SM00826">
    <property type="entry name" value="PKS_DH"/>
    <property type="match status" value="1"/>
</dbReference>
<dbReference type="SMART" id="SM00829">
    <property type="entry name" value="PKS_ER"/>
    <property type="match status" value="1"/>
</dbReference>
<dbReference type="SMART" id="SM00822">
    <property type="entry name" value="PKS_KR"/>
    <property type="match status" value="1"/>
</dbReference>
<dbReference type="SMART" id="SM00825">
    <property type="entry name" value="PKS_KS"/>
    <property type="match status" value="1"/>
</dbReference>
<dbReference type="SMART" id="SM00823">
    <property type="entry name" value="PKS_PP"/>
    <property type="match status" value="1"/>
</dbReference>
<dbReference type="SUPFAM" id="SSF47336">
    <property type="entry name" value="ACP-like"/>
    <property type="match status" value="1"/>
</dbReference>
<dbReference type="SUPFAM" id="SSF52777">
    <property type="entry name" value="CoA-dependent acyltransferases"/>
    <property type="match status" value="2"/>
</dbReference>
<dbReference type="SUPFAM" id="SSF52151">
    <property type="entry name" value="FabD/lysophospholipase-like"/>
    <property type="match status" value="1"/>
</dbReference>
<dbReference type="SUPFAM" id="SSF50129">
    <property type="entry name" value="GroES-like"/>
    <property type="match status" value="1"/>
</dbReference>
<dbReference type="SUPFAM" id="SSF51735">
    <property type="entry name" value="NAD(P)-binding Rossmann-fold domains"/>
    <property type="match status" value="2"/>
</dbReference>
<dbReference type="SUPFAM" id="SSF55048">
    <property type="entry name" value="Probable ACP-binding domain of malonyl-CoA ACP transacylase"/>
    <property type="match status" value="1"/>
</dbReference>
<dbReference type="SUPFAM" id="SSF53901">
    <property type="entry name" value="Thiolase-like"/>
    <property type="match status" value="1"/>
</dbReference>
<dbReference type="PROSITE" id="PS50075">
    <property type="entry name" value="CARRIER"/>
    <property type="match status" value="1"/>
</dbReference>
<dbReference type="PROSITE" id="PS52004">
    <property type="entry name" value="KS3_2"/>
    <property type="match status" value="1"/>
</dbReference>
<dbReference type="PROSITE" id="PS00012">
    <property type="entry name" value="PHOSPHOPANTETHEINE"/>
    <property type="match status" value="1"/>
</dbReference>
<dbReference type="PROSITE" id="PS52019">
    <property type="entry name" value="PKS_MFAS_DH"/>
    <property type="match status" value="1"/>
</dbReference>
<gene>
    <name evidence="9" type="primary">Ba17a</name>
    <name evidence="8" type="synonym">PKS17</name>
    <name type="ORF">MANI_025650</name>
</gene>
<proteinExistence type="evidence at protein level"/>
<reference key="1">
    <citation type="journal article" date="2014" name="BMC Genomics">
        <title>Comparative genome analysis of entomopathogenic fungi reveals a complex set of secreted proteins.</title>
        <authorList>
            <person name="Staats C.C."/>
            <person name="Junges A."/>
            <person name="Guedes R.L."/>
            <person name="Thompson C.E."/>
            <person name="de Morais G.L."/>
            <person name="Boldo J.T."/>
            <person name="de Almeida L.G."/>
            <person name="Andreis F.C."/>
            <person name="Gerber A.L."/>
            <person name="Sbaraini N."/>
            <person name="da Paixao R.L."/>
            <person name="Broetto L."/>
            <person name="Landell M."/>
            <person name="Santi L."/>
            <person name="Beys-da-Silva W.O."/>
            <person name="Silveira C.P."/>
            <person name="Serrano T.R."/>
            <person name="de Oliveira E.S."/>
            <person name="Kmetzsch L."/>
            <person name="Vainstein M.H."/>
            <person name="de Vasconcelos A.T."/>
            <person name="Schrank A."/>
        </authorList>
    </citation>
    <scope>NUCLEOTIDE SEQUENCE [LARGE SCALE GENOMIC DNA]</scope>
</reference>
<reference key="2">
    <citation type="journal article" date="2016" name="BMC Genomics">
        <title>Secondary metabolite gene clusters in the entomopathogen fungus Metarhizium anisopliae: genome identification and patterns of expression in a cuticle infection model.</title>
        <authorList>
            <person name="Sbaraini N."/>
            <person name="Guedes R.L."/>
            <person name="Andreis F.C."/>
            <person name="Junges A."/>
            <person name="de Morais G.L."/>
            <person name="Vainstein M.H."/>
            <person name="de Vasconcelos A.T."/>
            <person name="Schrank A."/>
        </authorList>
    </citation>
    <scope>IDENTIFICATION</scope>
    <scope>INDUCTION</scope>
</reference>
<reference key="3">
    <citation type="journal article" date="2021" name="Fungal Genet. Biol.">
        <title>Polyketides produced by the entomopathogenic fungus Metarhizium anisopliae induce Candida albicans growth.</title>
        <authorList>
            <person name="Sbaraini N."/>
            <person name="Hu J."/>
            <person name="Roux I."/>
            <person name="Phan C.S."/>
            <person name="Motta H."/>
            <person name="Rezaee H."/>
            <person name="Schrank A."/>
            <person name="Chooi Y.H."/>
            <person name="Christian Staats C."/>
        </authorList>
    </citation>
    <scope>FUNCTION</scope>
    <scope>DOMAIN</scope>
    <scope>CATALYTIC ACTIVITY</scope>
</reference>
<organism>
    <name type="scientific">Metarhizium anisopliae</name>
    <name type="common">Entomophthora anisopliae</name>
    <dbReference type="NCBI Taxonomy" id="5530"/>
    <lineage>
        <taxon>Eukaryota</taxon>
        <taxon>Fungi</taxon>
        <taxon>Dikarya</taxon>
        <taxon>Ascomycota</taxon>
        <taxon>Pezizomycotina</taxon>
        <taxon>Sordariomycetes</taxon>
        <taxon>Hypocreomycetidae</taxon>
        <taxon>Hypocreales</taxon>
        <taxon>Clavicipitaceae</taxon>
        <taxon>Metarhizium</taxon>
    </lineage>
</organism>
<name>BA17A_METAN</name>
<comment type="function">
    <text evidence="7">Highly reducing polyketide synthase; part of the gene cluster that mediates the biosynthesis of (2Z,4E,6E,10E)-9-hydroxydodeca-2,4,6,10-tetraenoic acid (BAA), (2E,4E,6E,10E)-9-hydroxydodeca-2,4,6,10-tetraenoic acid (BAB), and (2Z,4E,6E)-octa-2,4,6-trienedioic acid (PBA) (PubMed:33991663). The highly reducing polyketide synthase Ba17a is sufficent to produce PBA and BAA (PubMed:33991663). The still to be characterized protein Ba17b leads to an increased production of BAA as well as to the production of the new compound BAB (PubMed:33991663). BAA does not possess insecticidal activity against G.mellonella larvae, however, both BAA and BAB increase the growth of Candida albicans and BAA can mitigate the fungicidal effects of fluconazole over C.albicans, suggesting that generalist pathogens such as M.anisopliae, can potentially manipulate the yeast microbiota found in arthropods (and anywhere else) by the activity of compounds as BAA and BAB (PubMed:33991663).</text>
</comment>
<comment type="pathway">
    <text evidence="7">Secondary metabolite biosynthesis.</text>
</comment>
<comment type="induction">
    <text evidence="6">Expression is induced under mimicked-infection conditions.</text>
</comment>
<comment type="domain">
    <text evidence="10">Multidomain protein; including a starter unit:ACP transacylase (SAT) that selects the starter unit; a ketosynthase (KS) that catalyzes repeated decarboxylative condensation to elongate the polyketide backbone; a malonyl-CoA:ACP transacylase (MAT) that selects and transfers the extender unit malonyl-CoA; a dehydratase (DH) domain that reduces hydroxyl groups to enoyl groups; an enoylreductase (ER) domain that reduces enoyl groups to alkyl groups; a ketoreductase (KR) domain that catalyzes beta-ketoreduction steps; an acyl-carrier protein (ACP) that serves as the tether of the growing and completed polyketide via its phosphopantetheinyl arm; and a C-terminal choline/carnitine acyltransferase (cAT) domain that acts like a thioesterase domain, using water as a nucleophile to release the polyketide product.</text>
</comment>